<organism>
    <name type="scientific">Bacillus thuringiensis subsp. konkukian (strain 97-27)</name>
    <dbReference type="NCBI Taxonomy" id="281309"/>
    <lineage>
        <taxon>Bacteria</taxon>
        <taxon>Bacillati</taxon>
        <taxon>Bacillota</taxon>
        <taxon>Bacilli</taxon>
        <taxon>Bacillales</taxon>
        <taxon>Bacillaceae</taxon>
        <taxon>Bacillus</taxon>
        <taxon>Bacillus cereus group</taxon>
    </lineage>
</organism>
<protein>
    <recommendedName>
        <fullName evidence="1">Homoserine kinase</fullName>
        <shortName evidence="1">HK</shortName>
        <shortName evidence="1">HSK</shortName>
        <ecNumber evidence="1">2.7.1.39</ecNumber>
    </recommendedName>
</protein>
<evidence type="ECO:0000255" key="1">
    <source>
        <dbReference type="HAMAP-Rule" id="MF_00384"/>
    </source>
</evidence>
<dbReference type="EC" id="2.7.1.39" evidence="1"/>
<dbReference type="EMBL" id="AE017355">
    <property type="protein sequence ID" value="AAT63393.1"/>
    <property type="molecule type" value="Genomic_DNA"/>
</dbReference>
<dbReference type="RefSeq" id="WP_000612669.1">
    <property type="nucleotide sequence ID" value="NC_005957.1"/>
</dbReference>
<dbReference type="RefSeq" id="YP_036133.1">
    <property type="nucleotide sequence ID" value="NC_005957.1"/>
</dbReference>
<dbReference type="SMR" id="Q6HJZ3"/>
<dbReference type="KEGG" id="btk:BT9727_1801"/>
<dbReference type="PATRIC" id="fig|281309.8.peg.1895"/>
<dbReference type="HOGENOM" id="CLU_041243_0_0_9"/>
<dbReference type="UniPathway" id="UPA00050">
    <property type="reaction ID" value="UER00064"/>
</dbReference>
<dbReference type="Proteomes" id="UP000001301">
    <property type="component" value="Chromosome"/>
</dbReference>
<dbReference type="GO" id="GO:0005737">
    <property type="term" value="C:cytoplasm"/>
    <property type="evidence" value="ECO:0007669"/>
    <property type="project" value="UniProtKB-SubCell"/>
</dbReference>
<dbReference type="GO" id="GO:0005524">
    <property type="term" value="F:ATP binding"/>
    <property type="evidence" value="ECO:0007669"/>
    <property type="project" value="UniProtKB-UniRule"/>
</dbReference>
<dbReference type="GO" id="GO:0004413">
    <property type="term" value="F:homoserine kinase activity"/>
    <property type="evidence" value="ECO:0007669"/>
    <property type="project" value="UniProtKB-UniRule"/>
</dbReference>
<dbReference type="GO" id="GO:0009088">
    <property type="term" value="P:threonine biosynthetic process"/>
    <property type="evidence" value="ECO:0007669"/>
    <property type="project" value="UniProtKB-UniRule"/>
</dbReference>
<dbReference type="Gene3D" id="3.30.230.10">
    <property type="match status" value="1"/>
</dbReference>
<dbReference type="Gene3D" id="3.30.70.890">
    <property type="entry name" value="GHMP kinase, C-terminal domain"/>
    <property type="match status" value="1"/>
</dbReference>
<dbReference type="HAMAP" id="MF_00384">
    <property type="entry name" value="Homoser_kinase"/>
    <property type="match status" value="1"/>
</dbReference>
<dbReference type="InterPro" id="IPR013750">
    <property type="entry name" value="GHMP_kinase_C_dom"/>
</dbReference>
<dbReference type="InterPro" id="IPR036554">
    <property type="entry name" value="GHMP_kinase_C_sf"/>
</dbReference>
<dbReference type="InterPro" id="IPR006204">
    <property type="entry name" value="GHMP_kinase_N_dom"/>
</dbReference>
<dbReference type="InterPro" id="IPR006203">
    <property type="entry name" value="GHMP_knse_ATP-bd_CS"/>
</dbReference>
<dbReference type="InterPro" id="IPR000870">
    <property type="entry name" value="Homoserine_kinase"/>
</dbReference>
<dbReference type="InterPro" id="IPR020568">
    <property type="entry name" value="Ribosomal_Su5_D2-typ_SF"/>
</dbReference>
<dbReference type="InterPro" id="IPR014721">
    <property type="entry name" value="Ribsml_uS5_D2-typ_fold_subgr"/>
</dbReference>
<dbReference type="NCBIfam" id="TIGR00191">
    <property type="entry name" value="thrB"/>
    <property type="match status" value="1"/>
</dbReference>
<dbReference type="PANTHER" id="PTHR20861:SF1">
    <property type="entry name" value="HOMOSERINE KINASE"/>
    <property type="match status" value="1"/>
</dbReference>
<dbReference type="PANTHER" id="PTHR20861">
    <property type="entry name" value="HOMOSERINE/4-DIPHOSPHOCYTIDYL-2-C-METHYL-D-ERYTHRITOL KINASE"/>
    <property type="match status" value="1"/>
</dbReference>
<dbReference type="Pfam" id="PF08544">
    <property type="entry name" value="GHMP_kinases_C"/>
    <property type="match status" value="1"/>
</dbReference>
<dbReference type="Pfam" id="PF00288">
    <property type="entry name" value="GHMP_kinases_N"/>
    <property type="match status" value="1"/>
</dbReference>
<dbReference type="PIRSF" id="PIRSF000676">
    <property type="entry name" value="Homoser_kin"/>
    <property type="match status" value="1"/>
</dbReference>
<dbReference type="PRINTS" id="PR00958">
    <property type="entry name" value="HOMSERKINASE"/>
</dbReference>
<dbReference type="SUPFAM" id="SSF55060">
    <property type="entry name" value="GHMP Kinase, C-terminal domain"/>
    <property type="match status" value="1"/>
</dbReference>
<dbReference type="SUPFAM" id="SSF54211">
    <property type="entry name" value="Ribosomal protein S5 domain 2-like"/>
    <property type="match status" value="1"/>
</dbReference>
<dbReference type="PROSITE" id="PS00627">
    <property type="entry name" value="GHMP_KINASES_ATP"/>
    <property type="match status" value="1"/>
</dbReference>
<gene>
    <name evidence="1" type="primary">thrB</name>
    <name type="ordered locus">BT9727_1801</name>
</gene>
<comment type="function">
    <text evidence="1">Catalyzes the ATP-dependent phosphorylation of L-homoserine to L-homoserine phosphate.</text>
</comment>
<comment type="catalytic activity">
    <reaction evidence="1">
        <text>L-homoserine + ATP = O-phospho-L-homoserine + ADP + H(+)</text>
        <dbReference type="Rhea" id="RHEA:13985"/>
        <dbReference type="ChEBI" id="CHEBI:15378"/>
        <dbReference type="ChEBI" id="CHEBI:30616"/>
        <dbReference type="ChEBI" id="CHEBI:57476"/>
        <dbReference type="ChEBI" id="CHEBI:57590"/>
        <dbReference type="ChEBI" id="CHEBI:456216"/>
        <dbReference type="EC" id="2.7.1.39"/>
    </reaction>
</comment>
<comment type="pathway">
    <text evidence="1">Amino-acid biosynthesis; L-threonine biosynthesis; L-threonine from L-aspartate: step 4/5.</text>
</comment>
<comment type="subcellular location">
    <subcellularLocation>
        <location evidence="1">Cytoplasm</location>
    </subcellularLocation>
</comment>
<comment type="similarity">
    <text evidence="1">Belongs to the GHMP kinase family. Homoserine kinase subfamily.</text>
</comment>
<feature type="chain" id="PRO_0000156552" description="Homoserine kinase">
    <location>
        <begin position="1"/>
        <end position="297"/>
    </location>
</feature>
<feature type="binding site" evidence="1">
    <location>
        <begin position="82"/>
        <end position="92"/>
    </location>
    <ligand>
        <name>ATP</name>
        <dbReference type="ChEBI" id="CHEBI:30616"/>
    </ligand>
</feature>
<reference key="1">
    <citation type="journal article" date="2006" name="J. Bacteriol.">
        <title>Pathogenomic sequence analysis of Bacillus cereus and Bacillus thuringiensis isolates closely related to Bacillus anthracis.</title>
        <authorList>
            <person name="Han C.S."/>
            <person name="Xie G."/>
            <person name="Challacombe J.F."/>
            <person name="Altherr M.R."/>
            <person name="Bhotika S.S."/>
            <person name="Bruce D."/>
            <person name="Campbell C.S."/>
            <person name="Campbell M.L."/>
            <person name="Chen J."/>
            <person name="Chertkov O."/>
            <person name="Cleland C."/>
            <person name="Dimitrijevic M."/>
            <person name="Doggett N.A."/>
            <person name="Fawcett J.J."/>
            <person name="Glavina T."/>
            <person name="Goodwin L.A."/>
            <person name="Hill K.K."/>
            <person name="Hitchcock P."/>
            <person name="Jackson P.J."/>
            <person name="Keim P."/>
            <person name="Kewalramani A.R."/>
            <person name="Longmire J."/>
            <person name="Lucas S."/>
            <person name="Malfatti S."/>
            <person name="McMurry K."/>
            <person name="Meincke L.J."/>
            <person name="Misra M."/>
            <person name="Moseman B.L."/>
            <person name="Mundt M."/>
            <person name="Munk A.C."/>
            <person name="Okinaka R.T."/>
            <person name="Parson-Quintana B."/>
            <person name="Reilly L.P."/>
            <person name="Richardson P."/>
            <person name="Robinson D.L."/>
            <person name="Rubin E."/>
            <person name="Saunders E."/>
            <person name="Tapia R."/>
            <person name="Tesmer J.G."/>
            <person name="Thayer N."/>
            <person name="Thompson L.S."/>
            <person name="Tice H."/>
            <person name="Ticknor L.O."/>
            <person name="Wills P.L."/>
            <person name="Brettin T.S."/>
            <person name="Gilna P."/>
        </authorList>
    </citation>
    <scope>NUCLEOTIDE SEQUENCE [LARGE SCALE GENOMIC DNA]</scope>
    <source>
        <strain>97-27</strain>
    </source>
</reference>
<accession>Q6HJZ3</accession>
<name>KHSE_BACHK</name>
<proteinExistence type="inferred from homology"/>
<sequence>MIPLSIRVPASTANVGPGFDSVGIALSLYLHVVVKEKSDKWQVIHSFEDSIPTDDKNLIVSTACKVCPSLSPHIIEVTSNIPLTRGLGSSASAIVAGIELANQLGKLNLTIDQKVQIATNFEGHPDNVAASILGGTVIGALDGKNVSVVRIESKELGVISLIPNEELNTDESRSVLPDVFPFHEAVKASAISNVLVAALCQKKWEVVGEMMERDHFHEPYRLELVPLLPSIRKCAKEFGAYGTALSGAGPSIFILTPYEKRQEIAEQLARVFTSMKVCELEIDHRGITVNKKEHIGL</sequence>
<keyword id="KW-0028">Amino-acid biosynthesis</keyword>
<keyword id="KW-0067">ATP-binding</keyword>
<keyword id="KW-0963">Cytoplasm</keyword>
<keyword id="KW-0418">Kinase</keyword>
<keyword id="KW-0547">Nucleotide-binding</keyword>
<keyword id="KW-0791">Threonine biosynthesis</keyword>
<keyword id="KW-0808">Transferase</keyword>